<comment type="function">
    <text evidence="1">Catalyzes the methylation of C-1 in cobalt-precorrin-5B to form cobalt-precorrin-6A.</text>
</comment>
<comment type="catalytic activity">
    <reaction evidence="1">
        <text>Co-precorrin-5B + S-adenosyl-L-methionine = Co-precorrin-6A + S-adenosyl-L-homocysteine</text>
        <dbReference type="Rhea" id="RHEA:26285"/>
        <dbReference type="ChEBI" id="CHEBI:57856"/>
        <dbReference type="ChEBI" id="CHEBI:59789"/>
        <dbReference type="ChEBI" id="CHEBI:60063"/>
        <dbReference type="ChEBI" id="CHEBI:60064"/>
        <dbReference type="EC" id="2.1.1.195"/>
    </reaction>
</comment>
<comment type="pathway">
    <text evidence="1">Cofactor biosynthesis; adenosylcobalamin biosynthesis; cob(II)yrinate a,c-diamide from sirohydrochlorin (anaerobic route): step 6/10.</text>
</comment>
<comment type="similarity">
    <text evidence="1">Belongs to the CbiD family.</text>
</comment>
<evidence type="ECO:0000255" key="1">
    <source>
        <dbReference type="HAMAP-Rule" id="MF_00787"/>
    </source>
</evidence>
<dbReference type="EC" id="2.1.1.195" evidence="1"/>
<dbReference type="EMBL" id="CP001056">
    <property type="protein sequence ID" value="ACD24785.1"/>
    <property type="molecule type" value="Genomic_DNA"/>
</dbReference>
<dbReference type="SMR" id="B2TPG6"/>
<dbReference type="KEGG" id="cbk:CLL_A2936"/>
<dbReference type="HOGENOM" id="CLU_041273_1_0_9"/>
<dbReference type="UniPathway" id="UPA00148">
    <property type="reaction ID" value="UER00227"/>
</dbReference>
<dbReference type="Proteomes" id="UP000001195">
    <property type="component" value="Chromosome"/>
</dbReference>
<dbReference type="GO" id="GO:0043780">
    <property type="term" value="F:cobalt-precorrin-5B C1-methyltransferase activity"/>
    <property type="evidence" value="ECO:0007669"/>
    <property type="project" value="RHEA"/>
</dbReference>
<dbReference type="GO" id="GO:0019251">
    <property type="term" value="P:anaerobic cobalamin biosynthetic process"/>
    <property type="evidence" value="ECO:0007669"/>
    <property type="project" value="UniProtKB-UniRule"/>
</dbReference>
<dbReference type="GO" id="GO:0032259">
    <property type="term" value="P:methylation"/>
    <property type="evidence" value="ECO:0007669"/>
    <property type="project" value="UniProtKB-KW"/>
</dbReference>
<dbReference type="Gene3D" id="3.30.2110.10">
    <property type="entry name" value="CbiD-like"/>
    <property type="match status" value="1"/>
</dbReference>
<dbReference type="HAMAP" id="MF_00787">
    <property type="entry name" value="CbiD"/>
    <property type="match status" value="1"/>
</dbReference>
<dbReference type="InterPro" id="IPR002748">
    <property type="entry name" value="CbiD"/>
</dbReference>
<dbReference type="InterPro" id="IPR036074">
    <property type="entry name" value="CbiD_sf"/>
</dbReference>
<dbReference type="NCBIfam" id="TIGR00312">
    <property type="entry name" value="cbiD"/>
    <property type="match status" value="1"/>
</dbReference>
<dbReference type="PANTHER" id="PTHR35863">
    <property type="entry name" value="COBALT-PRECORRIN-5B C(1)-METHYLTRANSFERASE"/>
    <property type="match status" value="1"/>
</dbReference>
<dbReference type="PANTHER" id="PTHR35863:SF1">
    <property type="entry name" value="COBALT-PRECORRIN-5B C(1)-METHYLTRANSFERASE"/>
    <property type="match status" value="1"/>
</dbReference>
<dbReference type="Pfam" id="PF01888">
    <property type="entry name" value="CbiD"/>
    <property type="match status" value="1"/>
</dbReference>
<dbReference type="PIRSF" id="PIRSF026782">
    <property type="entry name" value="CbiD"/>
    <property type="match status" value="1"/>
</dbReference>
<dbReference type="SUPFAM" id="SSF111342">
    <property type="entry name" value="CbiD-like"/>
    <property type="match status" value="1"/>
</dbReference>
<organism>
    <name type="scientific">Clostridium botulinum (strain Eklund 17B / Type B)</name>
    <dbReference type="NCBI Taxonomy" id="935198"/>
    <lineage>
        <taxon>Bacteria</taxon>
        <taxon>Bacillati</taxon>
        <taxon>Bacillota</taxon>
        <taxon>Clostridia</taxon>
        <taxon>Eubacteriales</taxon>
        <taxon>Clostridiaceae</taxon>
        <taxon>Clostridium</taxon>
    </lineage>
</organism>
<proteinExistence type="inferred from homology"/>
<protein>
    <recommendedName>
        <fullName evidence="1">Cobalt-precorrin-5B C(1)-methyltransferase</fullName>
        <ecNumber evidence="1">2.1.1.195</ecNumber>
    </recommendedName>
    <alternativeName>
        <fullName evidence="1">Cobalt-precorrin-6A synthase</fullName>
    </alternativeName>
</protein>
<reference key="1">
    <citation type="submission" date="2008-04" db="EMBL/GenBank/DDBJ databases">
        <title>Complete sequence of Clostridium botulinum strain Eklund.</title>
        <authorList>
            <person name="Brinkac L.M."/>
            <person name="Brown J.L."/>
            <person name="Bruce D."/>
            <person name="Detter C."/>
            <person name="Munk C."/>
            <person name="Smith L.A."/>
            <person name="Smith T.J."/>
            <person name="Sutton G."/>
            <person name="Brettin T.S."/>
        </authorList>
    </citation>
    <scope>NUCLEOTIDE SEQUENCE [LARGE SCALE GENOMIC DNA]</scope>
    <source>
        <strain>Eklund 17B / Type B</strain>
    </source>
</reference>
<keyword id="KW-0169">Cobalamin biosynthesis</keyword>
<keyword id="KW-0489">Methyltransferase</keyword>
<keyword id="KW-0949">S-adenosyl-L-methionine</keyword>
<keyword id="KW-0808">Transferase</keyword>
<name>CBID_CLOBB</name>
<feature type="chain" id="PRO_1000133734" description="Cobalt-precorrin-5B C(1)-methyltransferase">
    <location>
        <begin position="1"/>
        <end position="381"/>
    </location>
</feature>
<sequence length="381" mass="41772">MFEMYIESGMNKLRCGYTTGSCATGAAKAATMLLFDLINSEEELNEIEIDTPKGIKVEMPIDHVVVGKNFVQCTILKFSGDDKDITMGLEIQATVEKISKEEAEELSKKLISNESKIIVLDGGIGVGRVTKDGLFVAKGEPAINPVPRQMIIKEIESILPKDKYVKVIISVPQGTEIGKKTFNPRLGIEGGISILGTSGIVYPMSEDALKASIKLEIKQKSLKNKNLILTFGNLGENYCKSLGYIEEEIIICSNFIGFALECCVSCKVKSILIVGHIGKMSKIAYGCFNTHSRVCGVRLEVLALELTLLGYDVSLVNKVLNEKTCEGAVKLLGSGYENLYKNIGKKILNSMKTYVYDELKIDAVMYYGASNPILLWSSCLE</sequence>
<gene>
    <name evidence="1" type="primary">cbiD</name>
    <name type="ordered locus">CLL_A2936</name>
</gene>
<accession>B2TPG6</accession>